<proteinExistence type="evidence at protein level"/>
<protein>
    <recommendedName>
        <fullName evidence="16">D-lysergyl-peptide-synthetase subunit 2</fullName>
        <shortName evidence="16">LPS2</shortName>
        <ecNumber evidence="10">2.3.1.-</ecNumber>
    </recommendedName>
    <alternativeName>
        <fullName evidence="16">Ergot alkaloid synthesis protein ps2</fullName>
    </alternativeName>
    <alternativeName>
        <fullName evidence="16">Nonribosomal peptide synthetase 2</fullName>
    </alternativeName>
</protein>
<accession>M1W600</accession>
<accession>G8GV61</accession>
<gene>
    <name evidence="17" type="primary">lpsB</name>
    <name evidence="16" type="synonym">cpps2</name>
    <name type="ORF">CPUR_04083</name>
</gene>
<organism>
    <name type="scientific">Claviceps purpurea (strain 20.1)</name>
    <name type="common">Ergot fungus</name>
    <name type="synonym">Sphacelia segetum</name>
    <dbReference type="NCBI Taxonomy" id="1111077"/>
    <lineage>
        <taxon>Eukaryota</taxon>
        <taxon>Fungi</taxon>
        <taxon>Dikarya</taxon>
        <taxon>Ascomycota</taxon>
        <taxon>Pezizomycotina</taxon>
        <taxon>Sordariomycetes</taxon>
        <taxon>Hypocreomycetidae</taxon>
        <taxon>Hypocreales</taxon>
        <taxon>Clavicipitaceae</taxon>
        <taxon>Claviceps</taxon>
    </lineage>
</organism>
<reference key="1">
    <citation type="submission" date="2011-06" db="EMBL/GenBank/DDBJ databases">
        <authorList>
            <person name="Florea S."/>
            <person name="Oeser B."/>
            <person name="Tudzynski P."/>
            <person name="Schardl C.L."/>
        </authorList>
    </citation>
    <scope>NUCLEOTIDE SEQUENCE [GENOMIC DNA]</scope>
    <source>
        <strain>20.1</strain>
    </source>
</reference>
<reference key="2">
    <citation type="journal article" date="2013" name="PLoS Genet.">
        <title>Plant-symbiotic fungi as chemical engineers: Multi-genome analysis of the Clavicipitaceae reveals dynamics of alkaloid loci.</title>
        <authorList>
            <person name="Schardl C.L."/>
            <person name="Young C.A."/>
            <person name="Hesse U."/>
            <person name="Amyotte S.G."/>
            <person name="Andreeva K."/>
            <person name="Calie P.J."/>
            <person name="Fleetwood D.J."/>
            <person name="Haws D.C."/>
            <person name="Moore N."/>
            <person name="Oeser B."/>
            <person name="Panaccione D.G."/>
            <person name="Schweri K.K."/>
            <person name="Voisey C.R."/>
            <person name="Farman M.L."/>
            <person name="Jaromczyk J.W."/>
            <person name="Roe B.A."/>
            <person name="O'Sullivan D.M."/>
            <person name="Scott B."/>
            <person name="Tudzynski P."/>
            <person name="An Z."/>
            <person name="Arnaoudova E.G."/>
            <person name="Bullock C.T."/>
            <person name="Charlton N.D."/>
            <person name="Chen L."/>
            <person name="Cox M."/>
            <person name="Dinkins R.D."/>
            <person name="Florea S."/>
            <person name="Glenn A.E."/>
            <person name="Gordon A."/>
            <person name="Gueldener U."/>
            <person name="Harris D.R."/>
            <person name="Hollin W."/>
            <person name="Jaromczyk J."/>
            <person name="Johnson R.D."/>
            <person name="Khan A.K."/>
            <person name="Leistner E."/>
            <person name="Leuchtmann A."/>
            <person name="Li C."/>
            <person name="Liu J."/>
            <person name="Liu J."/>
            <person name="Liu M."/>
            <person name="Mace W."/>
            <person name="Machado C."/>
            <person name="Nagabhyru P."/>
            <person name="Pan J."/>
            <person name="Schmid J."/>
            <person name="Sugawara K."/>
            <person name="Steiner U."/>
            <person name="Takach J.E."/>
            <person name="Tanaka E."/>
            <person name="Webb J.S."/>
            <person name="Wilson E.V."/>
            <person name="Wiseman J.L."/>
            <person name="Yoshida R."/>
            <person name="Zeng Z."/>
        </authorList>
    </citation>
    <scope>NUCLEOTIDE SEQUENCE [LARGE SCALE GENOMIC DNA]</scope>
    <source>
        <strain>20.1</strain>
    </source>
</reference>
<reference key="3">
    <citation type="journal article" date="1999" name="Mol. Gen. Genet.">
        <title>Evidence for an ergot alkaloid gene cluster in Claviceps purpurea.</title>
        <authorList>
            <person name="Tudzynski P."/>
            <person name="Hoelter K."/>
            <person name="Correia T.H."/>
            <person name="Arntz C."/>
            <person name="Grammel N."/>
            <person name="Keller U."/>
        </authorList>
    </citation>
    <scope>IDENTIFICATION IN THE EAS CLUSTER</scope>
    <scope>FUNCTION</scope>
    <source>
        <strain>P1 / 1029/N5</strain>
    </source>
</reference>
<reference key="4">
    <citation type="journal article" date="2001" name="Appl. Microbiol. Biotechnol.">
        <title>Biotechnology and genetics of ergot alkaloids.</title>
        <authorList>
            <person name="Tudzynski P."/>
            <person name="Correia T."/>
            <person name="Keller U."/>
        </authorList>
    </citation>
    <scope>BIOTECHNOLOGY</scope>
    <source>
        <strain>P1 / 1029/N5</strain>
    </source>
</reference>
<reference key="5">
    <citation type="journal article" date="2003" name="Chem. Biol.">
        <title>Molecular cloning and analysis of the ergopeptine assembly system in the ergot fungus Claviceps purpurea.</title>
        <authorList>
            <person name="Correia T."/>
            <person name="Grammel N."/>
            <person name="Ortel I."/>
            <person name="Keller U."/>
            <person name="Tudzynski P."/>
        </authorList>
    </citation>
    <scope>FUNCTION</scope>
    <scope>DOMAIN</scope>
</reference>
<reference key="6">
    <citation type="journal article" date="2004" name="Fungal Genet. Biol.">
        <title>The determinant step in ergot alkaloid biosynthesis by an endophyte of perennial ryegrass.</title>
        <authorList>
            <person name="Wang J."/>
            <person name="Machado C."/>
            <person name="Panaccione D.G."/>
            <person name="Tsai H.-F."/>
            <person name="Schardl C.L."/>
        </authorList>
    </citation>
    <scope>FUNCTION</scope>
    <source>
        <strain>ATCC 20102 / Farmitalia FI 32/17</strain>
    </source>
</reference>
<reference key="7">
    <citation type="journal article" date="2005" name="Phytochemistry">
        <title>The ergot alkaloid gene cluster in Claviceps purpurea: extension of the cluster sequence and intra species evolution.</title>
        <authorList>
            <person name="Haarmann T."/>
            <person name="Machado C."/>
            <person name="Lubbe Y."/>
            <person name="Correia T."/>
            <person name="Schardl C.L."/>
            <person name="Panaccione D.G."/>
            <person name="Tudzynski P."/>
        </authorList>
    </citation>
    <scope>FUNCTION</scope>
    <scope>IDENTIFICATION IN THE EAS CLUSTER</scope>
</reference>
<reference key="8">
    <citation type="journal article" date="2006" name="ChemBioChem">
        <title>Identification of the cytochrome P450 monooxygenase that bridges the clavine and ergoline alkaloid pathways.</title>
        <authorList>
            <person name="Haarmann T."/>
            <person name="Ortel I."/>
            <person name="Tudzynski P."/>
            <person name="Keller U."/>
        </authorList>
    </citation>
    <scope>FUNCTION</scope>
    <source>
        <strain>P1 / 1029/N5</strain>
    </source>
</reference>
<reference key="9">
    <citation type="journal article" date="2007" name="Appl. Environ. Microbiol.">
        <title>A complex ergovaline gene cluster in epichloe endophytes of grasses.</title>
        <authorList>
            <person name="Fleetwood D.J."/>
            <person name="Scott B."/>
            <person name="Lane G.A."/>
            <person name="Tanaka A."/>
            <person name="Johnson R.D."/>
        </authorList>
    </citation>
    <scope>FUNCTION</scope>
</reference>
<reference key="10">
    <citation type="journal article" date="2007" name="Appl. Environ. Microbiol.">
        <title>Comparison of ergot alkaloid biosynthesis gene clusters in Claviceps species indicates loss of late pathway steps in evolution of C. fusiformis.</title>
        <authorList>
            <person name="Lorenz N."/>
            <person name="Wilson E.V."/>
            <person name="Machado C."/>
            <person name="Schardl C.L."/>
            <person name="Tudzynski P."/>
        </authorList>
    </citation>
    <scope>FUNCTION</scope>
</reference>
<reference key="11">
    <citation type="journal article" date="2008" name="Fungal Genet. Biol.">
        <title>Use of a nonhomologous end joining deficient strain (Deltaku70) of the ergot fungus Claviceps purpurea for identification of a nonribosomal peptide synthetase gene involved in ergotamine biosynthesis.</title>
        <authorList>
            <person name="Haarmann T."/>
            <person name="Lorenz N."/>
            <person name="Tudzynski P."/>
        </authorList>
    </citation>
    <scope>FUNCTION</scope>
</reference>
<reference key="12">
    <citation type="journal article" date="2009" name="J. Biol. Chem.">
        <title>Combinatorial assembly of simple and complex D-lysergic acid alkaloid peptide classes in the ergot fungus Claviceps purpurea.</title>
        <authorList>
            <person name="Ortel I."/>
            <person name="Keller U."/>
        </authorList>
    </citation>
    <scope>FUNCTION</scope>
    <scope>DOMAIN</scope>
    <scope>CATALYTIC ACTIVITY</scope>
    <scope>PATHWAY</scope>
</reference>
<reference key="13">
    <citation type="journal article" date="2010" name="Appl. Environ. Microbiol.">
        <title>Alkaloid cluster gene ccsA of the ergot fungus Claviceps purpurea encodes chanoclavine I synthase, a flavin adenine dinucleotide-containing oxidoreductase mediating the transformation of N-methyl-dimethylallyltryptophan to chanoclavine I.</title>
        <authorList>
            <person name="Lorenz N."/>
            <person name="Olsovska J."/>
            <person name="Sulc M."/>
            <person name="Tudzynski P."/>
        </authorList>
    </citation>
    <scope>FUNCTION</scope>
</reference>
<reference key="14">
    <citation type="journal article" date="2010" name="J. Am. Chem. Soc.">
        <title>Controlling a structural branch point in ergot alkaloid biosynthesis.</title>
        <authorList>
            <person name="Cheng J.Z."/>
            <person name="Coyle C.M."/>
            <person name="Panaccione D.G."/>
            <person name="O'Connor S.E."/>
        </authorList>
    </citation>
    <scope>FUNCTION</scope>
    <source>
        <strain>ATCC 20102 / Farmitalia FI 32/17</strain>
    </source>
</reference>
<reference key="15">
    <citation type="journal article" date="2011" name="Curr. Genet.">
        <title>Ergot cluster-encoded catalase is required for synthesis of chanoclavine-I in Aspergillus fumigatus.</title>
        <authorList>
            <person name="Goetz K.E."/>
            <person name="Coyle C.M."/>
            <person name="Cheng J.Z."/>
            <person name="O'Connor S.E."/>
            <person name="Panaccione D.G."/>
        </authorList>
    </citation>
    <scope>FUNCTION</scope>
</reference>
<reference key="16">
    <citation type="journal article" date="2011" name="Org. Biomol. Chem.">
        <title>New insights into ergot alkaloid biosynthesis in Claviceps purpurea: an agroclavine synthase EasG catalyses, via a non-enzymatic adduct with reduced glutathione, the conversion of chanoclavine-I aldehyde to agroclavine.</title>
        <authorList>
            <person name="Matuschek M."/>
            <person name="Wallwey C."/>
            <person name="Xie X."/>
            <person name="Li S.M."/>
        </authorList>
    </citation>
    <scope>FUNCTION</scope>
</reference>
<reference key="17">
    <citation type="journal article" date="2014" name="Chem. Biol.">
        <title>Cyclolization of D-lysergic acid alkaloid peptides.</title>
        <authorList>
            <person name="Havemann J."/>
            <person name="Vogel D."/>
            <person name="Loll B."/>
            <person name="Keller U."/>
        </authorList>
    </citation>
    <scope>FUNCTION</scope>
</reference>
<keyword id="KW-0436">Ligase</keyword>
<keyword id="KW-0596">Phosphopantetheine</keyword>
<keyword id="KW-0597">Phosphoprotein</keyword>
<keyword id="KW-1185">Reference proteome</keyword>
<keyword id="KW-0808">Transferase</keyword>
<dbReference type="EC" id="2.3.1.-" evidence="10"/>
<dbReference type="EMBL" id="JN186799">
    <property type="protein sequence ID" value="AET79179.1"/>
    <property type="molecule type" value="Genomic_DNA"/>
</dbReference>
<dbReference type="EMBL" id="CAGA01000020">
    <property type="protein sequence ID" value="CCE30235.1"/>
    <property type="molecule type" value="Genomic_DNA"/>
</dbReference>
<dbReference type="SMR" id="M1W600"/>
<dbReference type="STRING" id="1111077.M1W600"/>
<dbReference type="VEuPathDB" id="FungiDB:CPUR_04083"/>
<dbReference type="eggNOG" id="KOG1178">
    <property type="taxonomic scope" value="Eukaryota"/>
</dbReference>
<dbReference type="HOGENOM" id="CLU_000022_60_3_1"/>
<dbReference type="OrthoDB" id="416786at2759"/>
<dbReference type="UniPathway" id="UPA00327"/>
<dbReference type="Proteomes" id="UP000016801">
    <property type="component" value="Unassembled WGS sequence"/>
</dbReference>
<dbReference type="GO" id="GO:0005737">
    <property type="term" value="C:cytoplasm"/>
    <property type="evidence" value="ECO:0007669"/>
    <property type="project" value="TreeGrafter"/>
</dbReference>
<dbReference type="GO" id="GO:0016874">
    <property type="term" value="F:ligase activity"/>
    <property type="evidence" value="ECO:0007669"/>
    <property type="project" value="UniProtKB-KW"/>
</dbReference>
<dbReference type="GO" id="GO:0031177">
    <property type="term" value="F:phosphopantetheine binding"/>
    <property type="evidence" value="ECO:0007669"/>
    <property type="project" value="InterPro"/>
</dbReference>
<dbReference type="GO" id="GO:0016740">
    <property type="term" value="F:transferase activity"/>
    <property type="evidence" value="ECO:0007669"/>
    <property type="project" value="UniProtKB-KW"/>
</dbReference>
<dbReference type="GO" id="GO:0043041">
    <property type="term" value="P:amino acid activation for nonribosomal peptide biosynthetic process"/>
    <property type="evidence" value="ECO:0007669"/>
    <property type="project" value="TreeGrafter"/>
</dbReference>
<dbReference type="GO" id="GO:0035835">
    <property type="term" value="P:indole alkaloid biosynthetic process"/>
    <property type="evidence" value="ECO:0007669"/>
    <property type="project" value="UniProtKB-UniPathway"/>
</dbReference>
<dbReference type="CDD" id="cd05918">
    <property type="entry name" value="A_NRPS_SidN3_like"/>
    <property type="match status" value="1"/>
</dbReference>
<dbReference type="CDD" id="cd19545">
    <property type="entry name" value="FUM14_C_NRPS-like"/>
    <property type="match status" value="1"/>
</dbReference>
<dbReference type="FunFam" id="3.30.300.30:FF:000015">
    <property type="entry name" value="Nonribosomal peptide synthase SidD"/>
    <property type="match status" value="1"/>
</dbReference>
<dbReference type="FunFam" id="1.10.1200.10:FF:000005">
    <property type="entry name" value="Nonribosomal peptide synthetase 1"/>
    <property type="match status" value="1"/>
</dbReference>
<dbReference type="Gene3D" id="3.30.300.30">
    <property type="match status" value="1"/>
</dbReference>
<dbReference type="Gene3D" id="3.40.50.980">
    <property type="match status" value="2"/>
</dbReference>
<dbReference type="Gene3D" id="1.10.1200.10">
    <property type="entry name" value="ACP-like"/>
    <property type="match status" value="1"/>
</dbReference>
<dbReference type="Gene3D" id="3.30.559.10">
    <property type="entry name" value="Chloramphenicol acetyltransferase-like domain"/>
    <property type="match status" value="1"/>
</dbReference>
<dbReference type="Gene3D" id="2.30.38.10">
    <property type="entry name" value="Luciferase, Domain 3"/>
    <property type="match status" value="1"/>
</dbReference>
<dbReference type="Gene3D" id="3.30.559.30">
    <property type="entry name" value="Nonribosomal peptide synthetase, condensation domain"/>
    <property type="match status" value="2"/>
</dbReference>
<dbReference type="InterPro" id="IPR010071">
    <property type="entry name" value="AA_adenyl_dom"/>
</dbReference>
<dbReference type="InterPro" id="IPR036736">
    <property type="entry name" value="ACP-like_sf"/>
</dbReference>
<dbReference type="InterPro" id="IPR045851">
    <property type="entry name" value="AMP-bd_C_sf"/>
</dbReference>
<dbReference type="InterPro" id="IPR000873">
    <property type="entry name" value="AMP-dep_synth/lig_dom"/>
</dbReference>
<dbReference type="InterPro" id="IPR023213">
    <property type="entry name" value="CAT-like_dom_sf"/>
</dbReference>
<dbReference type="InterPro" id="IPR001242">
    <property type="entry name" value="Condensatn"/>
</dbReference>
<dbReference type="InterPro" id="IPR020806">
    <property type="entry name" value="PKS_PP-bd"/>
</dbReference>
<dbReference type="InterPro" id="IPR009081">
    <property type="entry name" value="PP-bd_ACP"/>
</dbReference>
<dbReference type="InterPro" id="IPR006162">
    <property type="entry name" value="Ppantetheine_attach_site"/>
</dbReference>
<dbReference type="NCBIfam" id="TIGR01733">
    <property type="entry name" value="AA-adenyl-dom"/>
    <property type="match status" value="1"/>
</dbReference>
<dbReference type="PANTHER" id="PTHR45527">
    <property type="entry name" value="NONRIBOSOMAL PEPTIDE SYNTHETASE"/>
    <property type="match status" value="1"/>
</dbReference>
<dbReference type="PANTHER" id="PTHR45527:SF3">
    <property type="entry name" value="SIDEROPHORE SYNTHETASE (EUROFUNG)"/>
    <property type="match status" value="1"/>
</dbReference>
<dbReference type="Pfam" id="PF00501">
    <property type="entry name" value="AMP-binding"/>
    <property type="match status" value="1"/>
</dbReference>
<dbReference type="Pfam" id="PF00668">
    <property type="entry name" value="Condensation"/>
    <property type="match status" value="1"/>
</dbReference>
<dbReference type="Pfam" id="PF00550">
    <property type="entry name" value="PP-binding"/>
    <property type="match status" value="1"/>
</dbReference>
<dbReference type="SMART" id="SM00823">
    <property type="entry name" value="PKS_PP"/>
    <property type="match status" value="1"/>
</dbReference>
<dbReference type="SUPFAM" id="SSF56801">
    <property type="entry name" value="Acetyl-CoA synthetase-like"/>
    <property type="match status" value="1"/>
</dbReference>
<dbReference type="SUPFAM" id="SSF47336">
    <property type="entry name" value="ACP-like"/>
    <property type="match status" value="1"/>
</dbReference>
<dbReference type="SUPFAM" id="SSF52777">
    <property type="entry name" value="CoA-dependent acyltransferases"/>
    <property type="match status" value="3"/>
</dbReference>
<dbReference type="PROSITE" id="PS50075">
    <property type="entry name" value="CARRIER"/>
    <property type="match status" value="1"/>
</dbReference>
<dbReference type="PROSITE" id="PS00012">
    <property type="entry name" value="PHOSPHOPANTETHEINE"/>
    <property type="match status" value="1"/>
</dbReference>
<sequence>MATPEKWRKYLEDYIPCSFPTFLDNEGADSKSFASVLVRLEHPYGRLMSFSNNCGVDVAVVLNVAWGIVLQAYTGQDATCFAVIAESNLNIRPCRIRFTSDKVVSDILSACQSPCGEKTGDHDIPASHLSQDGGFLASEFFNTCIWGPMQGSQMPSETQAADMNRNALNLFDLVTRVEVDKSITRITLTYKRGLMREHQALAVAKAMERAISEIISGKERLDQFCLLTSEDRRQMSLWNMNLSDNSDARIETLIHEWCRWTPSAVAVCGWDGDFSYKELNELSTGVKHDLRHLGIGPEVFVPILFEKSRWAVIAMLGVMKAGGAFILLDPAHPPKRLRSICDKVSARLVVSSVQQADLAAGLAGHVVIVGGEVATAGMAQHVGEHDDSMDCIAAPHNALYAVFTSGSTGTPKGVVNSHSSFLAAMPVYLKALELDNNSRVFQFASYAFDVTIFDALMTLVAGGCVCVPSNADRSSDLTSAIQHFGTTHLSVTPTVARILDPQDFPSLKTIVLGGELSASDELLKWVNNVRVIRLYGASECTVMSIQCTSGPASSIKTINYETGNCCWVVNPQNHEQLRPLGAVGELLVEGAVVGRGYLDDASQTSETFIEAPAWLQELRQGSSTVYKSGDLVRIAADKSVQFVCRKSTQVKLRGQRIELGEVEHHVRLAIPSATECVVELITNPDASRPPMLMAFVLSDTDASTSSITARRNATSDAVFAEPSASFRSQIASITSKLRDALPSYMVPSVILPLRIMPLTSTDKINRKLLGQLAAALSREDLQLYQAQQTTYRAPSNDIEEAFQRFFAQVLGLSLDQIGADDHFFSLGGDSLTAMRLAAMARKAKFDLTVQNVFDHPELSELARHTKLVADESQEFPPPFTLVAGSKQGIVRDAARQCRLPSRVIEDVYPCTPLQKGLLAETMRDAAAFVAKIEVPLPRDVDLDRLRHAWAAVAKANPILRTRMIFSPSYGMLQVVVREDIPWIESDDVESQELVAVGRSLVQLILRRRPSTALFLHIHHAVYDGYSLPLMFAQLNNAYHGETLAFRPASAFIRYLATMPDATDYWQSMCQGLESPSFPALPHSSHRPHPDSKATHTVCVASPQAREYTPNTHVRLAWAITQAHEQGLLDVFYGTVVSGRNAPVDQIESMLIPTVATVPCRISLDVDSPVRKILHRIQDVATRGIPFEQIGLAEISHLGKDAAHACSFQTLLLMQPTAVEQNENDFFNTSTSDANYRADATYAINLFCTLENQDLSVTALYDGNIVSTDTMQRLLQNLGKSMQEIHAAPRTLIGDILKSLHSRL</sequence>
<feature type="chain" id="PRO_0000439111" description="D-lysergyl-peptide-synthetase subunit 2">
    <location>
        <begin position="1"/>
        <end position="1303"/>
    </location>
</feature>
<feature type="domain" description="Carrier" evidence="3">
    <location>
        <begin position="793"/>
        <end position="869"/>
    </location>
</feature>
<feature type="region of interest" description="Adenylation (A) domain" evidence="2">
    <location>
        <begin position="256"/>
        <end position="653"/>
    </location>
</feature>
<feature type="region of interest" description="Condensation (C) domain" evidence="2">
    <location>
        <begin position="905"/>
        <end position="1294"/>
    </location>
</feature>
<feature type="modified residue" description="O-(pantetheine 4'-phosphoryl)serine" evidence="3">
    <location>
        <position position="830"/>
    </location>
</feature>
<evidence type="ECO:0000250" key="1">
    <source>
        <dbReference type="UniProtKB" id="Q50EL0"/>
    </source>
</evidence>
<evidence type="ECO:0000255" key="2"/>
<evidence type="ECO:0000255" key="3">
    <source>
        <dbReference type="PROSITE-ProRule" id="PRU00258"/>
    </source>
</evidence>
<evidence type="ECO:0000269" key="4">
    <source>
    </source>
</evidence>
<evidence type="ECO:0000269" key="5">
    <source>
    </source>
</evidence>
<evidence type="ECO:0000269" key="6">
    <source>
    </source>
</evidence>
<evidence type="ECO:0000269" key="7">
    <source>
    </source>
</evidence>
<evidence type="ECO:0000269" key="8">
    <source>
    </source>
</evidence>
<evidence type="ECO:0000269" key="9">
    <source>
    </source>
</evidence>
<evidence type="ECO:0000269" key="10">
    <source>
    </source>
</evidence>
<evidence type="ECO:0000269" key="11">
    <source>
    </source>
</evidence>
<evidence type="ECO:0000269" key="12">
    <source>
    </source>
</evidence>
<evidence type="ECO:0000269" key="13">
    <source>
    </source>
</evidence>
<evidence type="ECO:0000269" key="14">
    <source>
    </source>
</evidence>
<evidence type="ECO:0000269" key="15">
    <source>
    </source>
</evidence>
<evidence type="ECO:0000303" key="16">
    <source>
    </source>
</evidence>
<evidence type="ECO:0000303" key="17">
    <source>
    </source>
</evidence>
<evidence type="ECO:0000305" key="18"/>
<evidence type="ECO:0000305" key="19">
    <source>
    </source>
</evidence>
<evidence type="ECO:0000305" key="20">
    <source>
    </source>
</evidence>
<comment type="function">
    <text evidence="1 4 5 6 7 8 9 10 11 12 13 14 15 19 20">D-lysergyl-peptide-synthetase subunit 2; part of the gene cluster that mediates the biosynthesis of fungal ergot alkaloid (PubMed:10071219, PubMed:14700635, PubMed:14732265, PubMed:15904941, PubMed:17308187, PubMed:17720822). DmaW catalyzes the first step of ergot alkaloid biosynthesis by condensing dimethylallyl diphosphate (DMAP) and tryptophan to form 4-dimethylallyl-L-tryptophan (PubMed:14732265). The second step is catalyzed by the methyltransferase easF that methylates 4-dimethylallyl-L-tryptophan in the presence of S-adenosyl-L-methionine, resulting in the formation of 4-dimethylallyl-L-abrine (By similarity). The catalase easC and the FAD-dependent oxidoreductase easE then transform 4-dimethylallyl-L-abrine to chanoclavine-I which is further oxidized by easD in the presence of NAD(+), resulting in the formation of chanoclavine-I aldehyde (PubMed:20118373, PubMed:21409592). Agroclavine dehydrogenase easG then mediates the conversion of chanoclavine-I aldehyde to agroclavine via a non-enzymatic adduct reaction: the substrate is an iminium intermediate that is formed spontaneously from chanoclavine-I aldehyde in the presence of glutathione (PubMed:20735127, PubMed:21494745). The presence of easA is not required to complete this reaction (PubMed:21494745). Further conversion of agroclavine to paspalic acid is a two-step process involving oxidation of agroclavine to elymoclavine and of elymoclavine to paspalic acid, the second step being performed by the elymoclavine oxidase cloA (PubMed:16538694, PubMed:17720822). Paspalic acid is then further converted to D-lysergic acid (PubMed:15904941). Ergopeptines are assembled from D-lysergic acid and three different amino acids by the D-lysergyl-peptide-synthetases composed each of a monomudular and a trimodular nonribosomal peptide synthetase subunit (PubMed:14700635, PubMed:15904941). LpsB and lpsC encode the monomodular subunits responsible for D-lysergic acid activation and incorporation into the ergopeptine backbone (PubMed:14700635). LpsA1 and A2 subunits encode the trimodular nonribosomal peptide synthetase assembling the tripeptide portion of ergopeptines (PubMed:14700635). LpsA1 is responsible for formation of the major ergopeptine, ergotamine, and lpsA2 for alpha-ergocryptine, the minor ergopeptine of the total alkaloid mixture elaborated by C.purpurea (PubMed:17560817, PubMed:19139103). D-lysergyl-tripeptides are assembled by the nonribosomal peptide synthetases and released as N-(D-lysergyl-aminoacyl)-lactams (PubMed:24361048). Cyclolization of the D-lysergyl-tripeptides is performed by the Fe(2+)/2-ketoglutarate-dependent dioxygenase easH which introduces a hydroxyl group into N-(D-lysergyl-aminoacyl)-lactam at alpha-C of the aminoacyl residue followed by spontaneous condensation with the terminal lactam carbonyl group (PubMed:24361048).</text>
</comment>
<comment type="pathway">
    <text evidence="10">Alkaloid biosynthesis; ergot alkaloid biosynthesis.</text>
</comment>
<comment type="domain">
    <text evidence="5">NRP synthetases are composed of discrete domains (adenylation (A), thiolation (T) or peptidyl carrier protein (PCP) and condensation (C) domains) which when grouped together are referred to as a single module (PubMed:14700635). Each module is responsible for the recognition (via the A domain) and incorporation of a single amino acid into the growing peptide product (PubMed:14700635). Thus, an NRP synthetase is generally composed of one or more modules and can terminate in a thioesterase domain (TE) or reductase domain (R) that releases the newly synthesized peptide from the enzyme (PubMed:14700635). LpsB is composed of only one module which is required for the activation of D-lysergic acid activation and its incorporation in the final ergot alkaloid (PubMed:19139103).</text>
</comment>
<comment type="similarity">
    <text evidence="18">Belongs to the NRP synthetase family.</text>
</comment>
<name>LPSB_CLAP2</name>